<name>RL14_PARXL</name>
<keyword id="KW-1185">Reference proteome</keyword>
<keyword id="KW-0687">Ribonucleoprotein</keyword>
<keyword id="KW-0689">Ribosomal protein</keyword>
<keyword id="KW-0694">RNA-binding</keyword>
<keyword id="KW-0699">rRNA-binding</keyword>
<feature type="chain" id="PRO_0000266466" description="Large ribosomal subunit protein uL14">
    <location>
        <begin position="1"/>
        <end position="122"/>
    </location>
</feature>
<comment type="function">
    <text evidence="1">Binds to 23S rRNA. Forms part of two intersubunit bridges in the 70S ribosome.</text>
</comment>
<comment type="subunit">
    <text evidence="1">Part of the 50S ribosomal subunit. Forms a cluster with proteins L3 and L19. In the 70S ribosome, L14 and L19 interact and together make contacts with the 16S rRNA in bridges B5 and B8.</text>
</comment>
<comment type="similarity">
    <text evidence="1">Belongs to the universal ribosomal protein uL14 family.</text>
</comment>
<protein>
    <recommendedName>
        <fullName evidence="1">Large ribosomal subunit protein uL14</fullName>
    </recommendedName>
    <alternativeName>
        <fullName evidence="2">50S ribosomal protein L14</fullName>
    </alternativeName>
</protein>
<reference key="1">
    <citation type="journal article" date="2006" name="Proc. Natl. Acad. Sci. U.S.A.">
        <title>Burkholderia xenovorans LB400 harbors a multi-replicon, 9.73-Mbp genome shaped for versatility.</title>
        <authorList>
            <person name="Chain P.S.G."/>
            <person name="Denef V.J."/>
            <person name="Konstantinidis K.T."/>
            <person name="Vergez L.M."/>
            <person name="Agullo L."/>
            <person name="Reyes V.L."/>
            <person name="Hauser L."/>
            <person name="Cordova M."/>
            <person name="Gomez L."/>
            <person name="Gonzalez M."/>
            <person name="Land M."/>
            <person name="Lao V."/>
            <person name="Larimer F."/>
            <person name="LiPuma J.J."/>
            <person name="Mahenthiralingam E."/>
            <person name="Malfatti S.A."/>
            <person name="Marx C.J."/>
            <person name="Parnell J.J."/>
            <person name="Ramette A."/>
            <person name="Richardson P."/>
            <person name="Seeger M."/>
            <person name="Smith D."/>
            <person name="Spilker T."/>
            <person name="Sul W.J."/>
            <person name="Tsoi T.V."/>
            <person name="Ulrich L.E."/>
            <person name="Zhulin I.B."/>
            <person name="Tiedje J.M."/>
        </authorList>
    </citation>
    <scope>NUCLEOTIDE SEQUENCE [LARGE SCALE GENOMIC DNA]</scope>
    <source>
        <strain>LB400</strain>
    </source>
</reference>
<accession>Q13TI0</accession>
<gene>
    <name evidence="1" type="primary">rplN</name>
    <name type="ordered locus">Bxeno_A4071</name>
    <name type="ORF">Bxe_A0324</name>
</gene>
<proteinExistence type="inferred from homology"/>
<organism>
    <name type="scientific">Paraburkholderia xenovorans (strain LB400)</name>
    <dbReference type="NCBI Taxonomy" id="266265"/>
    <lineage>
        <taxon>Bacteria</taxon>
        <taxon>Pseudomonadati</taxon>
        <taxon>Pseudomonadota</taxon>
        <taxon>Betaproteobacteria</taxon>
        <taxon>Burkholderiales</taxon>
        <taxon>Burkholderiaceae</taxon>
        <taxon>Paraburkholderia</taxon>
    </lineage>
</organism>
<sequence length="122" mass="13439">MIQTETRLEVADNTGAREVMCIKVLGGSKRRYASIGDIIKVTVKEATPRGRVKKGEIYNAVVVRTAKGVRRQDGSLIKFDGNAAVLLNAKLEPIGTRIFGPVTRELRSERFMKIVSLAPEVL</sequence>
<dbReference type="EMBL" id="CP000270">
    <property type="protein sequence ID" value="ABE32609.1"/>
    <property type="molecule type" value="Genomic_DNA"/>
</dbReference>
<dbReference type="RefSeq" id="WP_006052212.1">
    <property type="nucleotide sequence ID" value="NZ_CP008760.1"/>
</dbReference>
<dbReference type="SMR" id="Q13TI0"/>
<dbReference type="STRING" id="266265.Bxe_A0324"/>
<dbReference type="GeneID" id="97311002"/>
<dbReference type="KEGG" id="bxb:DR64_2494"/>
<dbReference type="KEGG" id="bxe:Bxe_A0324"/>
<dbReference type="eggNOG" id="COG0093">
    <property type="taxonomic scope" value="Bacteria"/>
</dbReference>
<dbReference type="OrthoDB" id="9806379at2"/>
<dbReference type="Proteomes" id="UP000001817">
    <property type="component" value="Chromosome 1"/>
</dbReference>
<dbReference type="GO" id="GO:0022625">
    <property type="term" value="C:cytosolic large ribosomal subunit"/>
    <property type="evidence" value="ECO:0007669"/>
    <property type="project" value="TreeGrafter"/>
</dbReference>
<dbReference type="GO" id="GO:0070180">
    <property type="term" value="F:large ribosomal subunit rRNA binding"/>
    <property type="evidence" value="ECO:0007669"/>
    <property type="project" value="TreeGrafter"/>
</dbReference>
<dbReference type="GO" id="GO:0003735">
    <property type="term" value="F:structural constituent of ribosome"/>
    <property type="evidence" value="ECO:0007669"/>
    <property type="project" value="InterPro"/>
</dbReference>
<dbReference type="GO" id="GO:0006412">
    <property type="term" value="P:translation"/>
    <property type="evidence" value="ECO:0007669"/>
    <property type="project" value="UniProtKB-UniRule"/>
</dbReference>
<dbReference type="CDD" id="cd00337">
    <property type="entry name" value="Ribosomal_uL14"/>
    <property type="match status" value="1"/>
</dbReference>
<dbReference type="FunFam" id="2.40.150.20:FF:000001">
    <property type="entry name" value="50S ribosomal protein L14"/>
    <property type="match status" value="1"/>
</dbReference>
<dbReference type="Gene3D" id="2.40.150.20">
    <property type="entry name" value="Ribosomal protein L14"/>
    <property type="match status" value="1"/>
</dbReference>
<dbReference type="HAMAP" id="MF_01367">
    <property type="entry name" value="Ribosomal_uL14"/>
    <property type="match status" value="1"/>
</dbReference>
<dbReference type="InterPro" id="IPR000218">
    <property type="entry name" value="Ribosomal_uL14"/>
</dbReference>
<dbReference type="InterPro" id="IPR005745">
    <property type="entry name" value="Ribosomal_uL14_bac-type"/>
</dbReference>
<dbReference type="InterPro" id="IPR019972">
    <property type="entry name" value="Ribosomal_uL14_CS"/>
</dbReference>
<dbReference type="InterPro" id="IPR036853">
    <property type="entry name" value="Ribosomal_uL14_sf"/>
</dbReference>
<dbReference type="NCBIfam" id="TIGR01067">
    <property type="entry name" value="rplN_bact"/>
    <property type="match status" value="1"/>
</dbReference>
<dbReference type="PANTHER" id="PTHR11761">
    <property type="entry name" value="50S/60S RIBOSOMAL PROTEIN L14/L23"/>
    <property type="match status" value="1"/>
</dbReference>
<dbReference type="PANTHER" id="PTHR11761:SF3">
    <property type="entry name" value="LARGE RIBOSOMAL SUBUNIT PROTEIN UL14M"/>
    <property type="match status" value="1"/>
</dbReference>
<dbReference type="Pfam" id="PF00238">
    <property type="entry name" value="Ribosomal_L14"/>
    <property type="match status" value="1"/>
</dbReference>
<dbReference type="SMART" id="SM01374">
    <property type="entry name" value="Ribosomal_L14"/>
    <property type="match status" value="1"/>
</dbReference>
<dbReference type="SUPFAM" id="SSF50193">
    <property type="entry name" value="Ribosomal protein L14"/>
    <property type="match status" value="1"/>
</dbReference>
<dbReference type="PROSITE" id="PS00049">
    <property type="entry name" value="RIBOSOMAL_L14"/>
    <property type="match status" value="1"/>
</dbReference>
<evidence type="ECO:0000255" key="1">
    <source>
        <dbReference type="HAMAP-Rule" id="MF_01367"/>
    </source>
</evidence>
<evidence type="ECO:0000305" key="2"/>